<sequence>MKSYQNEFIKFAVEKRVLRFGDFTLKSGRMSPYFFNSGLFNSGASLARLGRFYAQAISGSGLAFEVLFGPAYKGIPLVTATAIALMEKYGRDIGYAFNRKEVKDHGEGGKVVGTPLKGARVLIVDDVISAGTSVREAATLIHAAGATLAGVAISLDRQEQGQGKQSAVQEVEAQYGIPVVSIACLDHLIRHLEEKPEMKEHLDKMQAYKKQYGVERVFNP</sequence>
<name>PYRE_NITOC</name>
<proteinExistence type="inferred from homology"/>
<comment type="function">
    <text evidence="1">Catalyzes the transfer of a ribosyl phosphate group from 5-phosphoribose 1-diphosphate to orotate, leading to the formation of orotidine monophosphate (OMP).</text>
</comment>
<comment type="catalytic activity">
    <reaction evidence="1">
        <text>orotidine 5'-phosphate + diphosphate = orotate + 5-phospho-alpha-D-ribose 1-diphosphate</text>
        <dbReference type="Rhea" id="RHEA:10380"/>
        <dbReference type="ChEBI" id="CHEBI:30839"/>
        <dbReference type="ChEBI" id="CHEBI:33019"/>
        <dbReference type="ChEBI" id="CHEBI:57538"/>
        <dbReference type="ChEBI" id="CHEBI:58017"/>
        <dbReference type="EC" id="2.4.2.10"/>
    </reaction>
</comment>
<comment type="cofactor">
    <cofactor evidence="1">
        <name>Mg(2+)</name>
        <dbReference type="ChEBI" id="CHEBI:18420"/>
    </cofactor>
</comment>
<comment type="pathway">
    <text evidence="1">Pyrimidine metabolism; UMP biosynthesis via de novo pathway; UMP from orotate: step 1/2.</text>
</comment>
<comment type="subunit">
    <text evidence="1">Homodimer.</text>
</comment>
<comment type="similarity">
    <text evidence="1">Belongs to the purine/pyrimidine phosphoribosyltransferase family. PyrE subfamily.</text>
</comment>
<keyword id="KW-0328">Glycosyltransferase</keyword>
<keyword id="KW-0460">Magnesium</keyword>
<keyword id="KW-0665">Pyrimidine biosynthesis</keyword>
<keyword id="KW-1185">Reference proteome</keyword>
<keyword id="KW-0808">Transferase</keyword>
<reference key="1">
    <citation type="journal article" date="2006" name="Appl. Environ. Microbiol.">
        <title>Complete genome sequence of the marine, chemolithoautotrophic, ammonia-oxidizing bacterium Nitrosococcus oceani ATCC 19707.</title>
        <authorList>
            <person name="Klotz M.G."/>
            <person name="Arp D.J."/>
            <person name="Chain P.S.G."/>
            <person name="El-Sheikh A.F."/>
            <person name="Hauser L.J."/>
            <person name="Hommes N.G."/>
            <person name="Larimer F.W."/>
            <person name="Malfatti S.A."/>
            <person name="Norton J.M."/>
            <person name="Poret-Peterson A.T."/>
            <person name="Vergez L.M."/>
            <person name="Ward B.B."/>
        </authorList>
    </citation>
    <scope>NUCLEOTIDE SEQUENCE [LARGE SCALE GENOMIC DNA]</scope>
    <source>
        <strain>ATCC 19707 / BCRC 17464 / JCM 30415 / NCIMB 11848 / C-107</strain>
    </source>
</reference>
<gene>
    <name evidence="1" type="primary">pyrE</name>
    <name type="ordered locus">Noc_2998</name>
</gene>
<organism>
    <name type="scientific">Nitrosococcus oceani (strain ATCC 19707 / BCRC 17464 / JCM 30415 / NCIMB 11848 / C-107)</name>
    <dbReference type="NCBI Taxonomy" id="323261"/>
    <lineage>
        <taxon>Bacteria</taxon>
        <taxon>Pseudomonadati</taxon>
        <taxon>Pseudomonadota</taxon>
        <taxon>Gammaproteobacteria</taxon>
        <taxon>Chromatiales</taxon>
        <taxon>Chromatiaceae</taxon>
        <taxon>Nitrosococcus</taxon>
    </lineage>
</organism>
<feature type="chain" id="PRO_1000066262" description="Orotate phosphoribosyltransferase">
    <location>
        <begin position="1"/>
        <end position="220"/>
    </location>
</feature>
<feature type="binding site" description="in other chain" evidence="1">
    <location>
        <position position="26"/>
    </location>
    <ligand>
        <name>5-phospho-alpha-D-ribose 1-diphosphate</name>
        <dbReference type="ChEBI" id="CHEBI:58017"/>
        <note>ligand shared between dimeric partners</note>
    </ligand>
</feature>
<feature type="binding site" evidence="1">
    <location>
        <begin position="34"/>
        <end position="35"/>
    </location>
    <ligand>
        <name>orotate</name>
        <dbReference type="ChEBI" id="CHEBI:30839"/>
    </ligand>
</feature>
<feature type="binding site" description="in other chain" evidence="1">
    <location>
        <begin position="72"/>
        <end position="73"/>
    </location>
    <ligand>
        <name>5-phospho-alpha-D-ribose 1-diphosphate</name>
        <dbReference type="ChEBI" id="CHEBI:58017"/>
        <note>ligand shared between dimeric partners</note>
    </ligand>
</feature>
<feature type="binding site" evidence="1">
    <location>
        <position position="99"/>
    </location>
    <ligand>
        <name>5-phospho-alpha-D-ribose 1-diphosphate</name>
        <dbReference type="ChEBI" id="CHEBI:58017"/>
        <note>ligand shared between dimeric partners</note>
    </ligand>
</feature>
<feature type="binding site" description="in other chain" evidence="1">
    <location>
        <position position="100"/>
    </location>
    <ligand>
        <name>5-phospho-alpha-D-ribose 1-diphosphate</name>
        <dbReference type="ChEBI" id="CHEBI:58017"/>
        <note>ligand shared between dimeric partners</note>
    </ligand>
</feature>
<feature type="binding site" evidence="1">
    <location>
        <position position="103"/>
    </location>
    <ligand>
        <name>5-phospho-alpha-D-ribose 1-diphosphate</name>
        <dbReference type="ChEBI" id="CHEBI:58017"/>
        <note>ligand shared between dimeric partners</note>
    </ligand>
</feature>
<feature type="binding site" evidence="1">
    <location>
        <position position="105"/>
    </location>
    <ligand>
        <name>5-phospho-alpha-D-ribose 1-diphosphate</name>
        <dbReference type="ChEBI" id="CHEBI:58017"/>
        <note>ligand shared between dimeric partners</note>
    </ligand>
</feature>
<feature type="binding site" description="in other chain" evidence="1">
    <location>
        <begin position="125"/>
        <end position="133"/>
    </location>
    <ligand>
        <name>5-phospho-alpha-D-ribose 1-diphosphate</name>
        <dbReference type="ChEBI" id="CHEBI:58017"/>
        <note>ligand shared between dimeric partners</note>
    </ligand>
</feature>
<feature type="binding site" evidence="1">
    <location>
        <position position="129"/>
    </location>
    <ligand>
        <name>orotate</name>
        <dbReference type="ChEBI" id="CHEBI:30839"/>
    </ligand>
</feature>
<feature type="binding site" evidence="1">
    <location>
        <position position="157"/>
    </location>
    <ligand>
        <name>orotate</name>
        <dbReference type="ChEBI" id="CHEBI:30839"/>
    </ligand>
</feature>
<accession>Q3J6V6</accession>
<evidence type="ECO:0000255" key="1">
    <source>
        <dbReference type="HAMAP-Rule" id="MF_01208"/>
    </source>
</evidence>
<dbReference type="EC" id="2.4.2.10" evidence="1"/>
<dbReference type="EMBL" id="CP000127">
    <property type="protein sequence ID" value="ABA59440.1"/>
    <property type="molecule type" value="Genomic_DNA"/>
</dbReference>
<dbReference type="RefSeq" id="WP_002812459.1">
    <property type="nucleotide sequence ID" value="NC_007484.1"/>
</dbReference>
<dbReference type="SMR" id="Q3J6V6"/>
<dbReference type="FunCoup" id="Q3J6V6">
    <property type="interactions" value="469"/>
</dbReference>
<dbReference type="STRING" id="323261.Noc_2998"/>
<dbReference type="KEGG" id="noc:Noc_2998"/>
<dbReference type="eggNOG" id="COG0461">
    <property type="taxonomic scope" value="Bacteria"/>
</dbReference>
<dbReference type="HOGENOM" id="CLU_074878_0_1_6"/>
<dbReference type="InParanoid" id="Q3J6V6"/>
<dbReference type="UniPathway" id="UPA00070">
    <property type="reaction ID" value="UER00119"/>
</dbReference>
<dbReference type="Proteomes" id="UP000006838">
    <property type="component" value="Chromosome"/>
</dbReference>
<dbReference type="GO" id="GO:0005737">
    <property type="term" value="C:cytoplasm"/>
    <property type="evidence" value="ECO:0007669"/>
    <property type="project" value="TreeGrafter"/>
</dbReference>
<dbReference type="GO" id="GO:0000287">
    <property type="term" value="F:magnesium ion binding"/>
    <property type="evidence" value="ECO:0007669"/>
    <property type="project" value="UniProtKB-UniRule"/>
</dbReference>
<dbReference type="GO" id="GO:0004588">
    <property type="term" value="F:orotate phosphoribosyltransferase activity"/>
    <property type="evidence" value="ECO:0007669"/>
    <property type="project" value="UniProtKB-UniRule"/>
</dbReference>
<dbReference type="GO" id="GO:0006207">
    <property type="term" value="P:'de novo' pyrimidine nucleobase biosynthetic process"/>
    <property type="evidence" value="ECO:0007669"/>
    <property type="project" value="TreeGrafter"/>
</dbReference>
<dbReference type="GO" id="GO:0044205">
    <property type="term" value="P:'de novo' UMP biosynthetic process"/>
    <property type="evidence" value="ECO:0007669"/>
    <property type="project" value="UniProtKB-UniRule"/>
</dbReference>
<dbReference type="GO" id="GO:0046132">
    <property type="term" value="P:pyrimidine ribonucleoside biosynthetic process"/>
    <property type="evidence" value="ECO:0007669"/>
    <property type="project" value="TreeGrafter"/>
</dbReference>
<dbReference type="CDD" id="cd06223">
    <property type="entry name" value="PRTases_typeI"/>
    <property type="match status" value="1"/>
</dbReference>
<dbReference type="FunFam" id="3.40.50.2020:FF:000008">
    <property type="entry name" value="Orotate phosphoribosyltransferase"/>
    <property type="match status" value="1"/>
</dbReference>
<dbReference type="Gene3D" id="3.40.50.2020">
    <property type="match status" value="1"/>
</dbReference>
<dbReference type="HAMAP" id="MF_01208">
    <property type="entry name" value="PyrE"/>
    <property type="match status" value="1"/>
</dbReference>
<dbReference type="InterPro" id="IPR023031">
    <property type="entry name" value="OPRT"/>
</dbReference>
<dbReference type="InterPro" id="IPR004467">
    <property type="entry name" value="Or_phspho_trans_dom"/>
</dbReference>
<dbReference type="InterPro" id="IPR000836">
    <property type="entry name" value="PRibTrfase_dom"/>
</dbReference>
<dbReference type="InterPro" id="IPR029057">
    <property type="entry name" value="PRTase-like"/>
</dbReference>
<dbReference type="NCBIfam" id="TIGR00336">
    <property type="entry name" value="pyrE"/>
    <property type="match status" value="1"/>
</dbReference>
<dbReference type="PANTHER" id="PTHR46683">
    <property type="entry name" value="OROTATE PHOSPHORIBOSYLTRANSFERASE 1-RELATED"/>
    <property type="match status" value="1"/>
</dbReference>
<dbReference type="PANTHER" id="PTHR46683:SF1">
    <property type="entry name" value="OROTATE PHOSPHORIBOSYLTRANSFERASE 1-RELATED"/>
    <property type="match status" value="1"/>
</dbReference>
<dbReference type="Pfam" id="PF00156">
    <property type="entry name" value="Pribosyltran"/>
    <property type="match status" value="1"/>
</dbReference>
<dbReference type="SUPFAM" id="SSF53271">
    <property type="entry name" value="PRTase-like"/>
    <property type="match status" value="1"/>
</dbReference>
<dbReference type="PROSITE" id="PS00103">
    <property type="entry name" value="PUR_PYR_PR_TRANSFER"/>
    <property type="match status" value="1"/>
</dbReference>
<protein>
    <recommendedName>
        <fullName evidence="1">Orotate phosphoribosyltransferase</fullName>
        <shortName evidence="1">OPRT</shortName>
        <shortName evidence="1">OPRTase</shortName>
        <ecNumber evidence="1">2.4.2.10</ecNumber>
    </recommendedName>
</protein>